<reference key="1">
    <citation type="journal article" date="2006" name="Mol. Microbiol.">
        <title>Role of pathogenicity island-associated integrases in the genome plasticity of uropathogenic Escherichia coli strain 536.</title>
        <authorList>
            <person name="Hochhut B."/>
            <person name="Wilde C."/>
            <person name="Balling G."/>
            <person name="Middendorf B."/>
            <person name="Dobrindt U."/>
            <person name="Brzuszkiewicz E."/>
            <person name="Gottschalk G."/>
            <person name="Carniel E."/>
            <person name="Hacker J."/>
        </authorList>
    </citation>
    <scope>NUCLEOTIDE SEQUENCE [LARGE SCALE GENOMIC DNA]</scope>
    <source>
        <strain>536 / UPEC</strain>
    </source>
</reference>
<sequence>MNSLFASTARGLEELLKTELENLGAVECQVVQGGVHFKGDTRLVYQSLMWSRLASRIMLPLGECKVYSDLDLYLGVQAINWTEMFNPGATFAVHFSGLNDTIRNSQYGAMKVKDAIVDAFTRKNLPRPNVDRDAPDIRVNVWLHKETASIALDLSGDGLHLRGYRDRAGIAPIKETLAAAIVMRSGWQPGTPLLDPMCGSGTLLIEAAMLATDRAPGLHRGRWGFSGWTQHDEAIWQEVKAEAQTRARKGLAEYSSHFYGSDSDARVIQRARTNARLAGIGELITFEVKDVAQLTNPLPKGPYGTVLSNPPYGERLDSEPALIALHSLLGRIMKNQFGGWNLSLFSASPDLLSCLQLRADKQYKAKNGPLDCVQKNYHVAESTPDSKPAMAAEDYANRLRKNLKKFEKWARQEGIECYRLYDADLPEYNVAVDRYADWVVVQEYAPPKTIDAHKARQRLFDIIAATISVLGIAPNKLVLKTRERQKGKNQYQKLGEKGEFLEVTEYNAHLWVNLTDYLDTGLFLDHRIARRMLGQMSKGKDFLNLFSYTGSATVHAGLGGARSTTTVDMSRTYLEWAERNLRLNGLTGRAHRLIQADCLAWLREANEQFDLIFIDPPTFSNSKRMEDAFDVQRDHLVLMKDLKRLLRAGGTIMFSNNKRGFRMDLDGLAKLGLKAQEITQKTLSQDFARNRQIHNCWLITAA</sequence>
<comment type="function">
    <text evidence="1">Specifically methylates the guanine in position 2445 (m2G2445) and the guanine in position 2069 (m7G2069) of 23S rRNA.</text>
</comment>
<comment type="catalytic activity">
    <reaction evidence="1">
        <text>guanosine(2445) in 23S rRNA + S-adenosyl-L-methionine = N(2)-methylguanosine(2445) in 23S rRNA + S-adenosyl-L-homocysteine + H(+)</text>
        <dbReference type="Rhea" id="RHEA:42740"/>
        <dbReference type="Rhea" id="RHEA-COMP:10215"/>
        <dbReference type="Rhea" id="RHEA-COMP:10216"/>
        <dbReference type="ChEBI" id="CHEBI:15378"/>
        <dbReference type="ChEBI" id="CHEBI:57856"/>
        <dbReference type="ChEBI" id="CHEBI:59789"/>
        <dbReference type="ChEBI" id="CHEBI:74269"/>
        <dbReference type="ChEBI" id="CHEBI:74481"/>
        <dbReference type="EC" id="2.1.1.173"/>
    </reaction>
</comment>
<comment type="catalytic activity">
    <reaction evidence="1">
        <text>guanosine(2069) in 23S rRNA + S-adenosyl-L-methionine = N(2)-methylguanosine(2069) in 23S rRNA + S-adenosyl-L-homocysteine + H(+)</text>
        <dbReference type="Rhea" id="RHEA:43772"/>
        <dbReference type="Rhea" id="RHEA-COMP:10688"/>
        <dbReference type="Rhea" id="RHEA-COMP:10689"/>
        <dbReference type="ChEBI" id="CHEBI:15378"/>
        <dbReference type="ChEBI" id="CHEBI:57856"/>
        <dbReference type="ChEBI" id="CHEBI:59789"/>
        <dbReference type="ChEBI" id="CHEBI:74269"/>
        <dbReference type="ChEBI" id="CHEBI:74481"/>
        <dbReference type="EC" id="2.1.1.264"/>
    </reaction>
</comment>
<comment type="subcellular location">
    <subcellularLocation>
        <location evidence="1">Cytoplasm</location>
    </subcellularLocation>
</comment>
<comment type="similarity">
    <text evidence="1">Belongs to the methyltransferase superfamily. RlmKL family.</text>
</comment>
<evidence type="ECO:0000255" key="1">
    <source>
        <dbReference type="HAMAP-Rule" id="MF_01858"/>
    </source>
</evidence>
<keyword id="KW-0963">Cytoplasm</keyword>
<keyword id="KW-0489">Methyltransferase</keyword>
<keyword id="KW-0694">RNA-binding</keyword>
<keyword id="KW-0698">rRNA processing</keyword>
<keyword id="KW-0949">S-adenosyl-L-methionine</keyword>
<keyword id="KW-0808">Transferase</keyword>
<organism>
    <name type="scientific">Escherichia coli O6:K15:H31 (strain 536 / UPEC)</name>
    <dbReference type="NCBI Taxonomy" id="362663"/>
    <lineage>
        <taxon>Bacteria</taxon>
        <taxon>Pseudomonadati</taxon>
        <taxon>Pseudomonadota</taxon>
        <taxon>Gammaproteobacteria</taxon>
        <taxon>Enterobacterales</taxon>
        <taxon>Enterobacteriaceae</taxon>
        <taxon>Escherichia</taxon>
    </lineage>
</organism>
<proteinExistence type="inferred from homology"/>
<name>RLMKL_ECOL5</name>
<feature type="chain" id="PRO_0000366748" description="Ribosomal RNA large subunit methyltransferase K/L">
    <location>
        <begin position="1"/>
        <end position="702"/>
    </location>
</feature>
<feature type="domain" description="THUMP" evidence="1">
    <location>
        <begin position="43"/>
        <end position="154"/>
    </location>
</feature>
<protein>
    <recommendedName>
        <fullName evidence="1">Ribosomal RNA large subunit methyltransferase K/L</fullName>
    </recommendedName>
    <domain>
        <recommendedName>
            <fullName evidence="1">23S rRNA m2G2445 methyltransferase</fullName>
            <ecNumber evidence="1">2.1.1.173</ecNumber>
        </recommendedName>
        <alternativeName>
            <fullName evidence="1">rRNA (guanine-N(2)-)-methyltransferase RlmL</fullName>
        </alternativeName>
    </domain>
    <domain>
        <recommendedName>
            <fullName evidence="1">23S rRNA m7G2069 methyltransferase</fullName>
            <ecNumber evidence="1">2.1.1.264</ecNumber>
        </recommendedName>
        <alternativeName>
            <fullName evidence="1">rRNA (guanine-N(7)-)-methyltransferase RlmK</fullName>
        </alternativeName>
    </domain>
</protein>
<dbReference type="EC" id="2.1.1.173" evidence="1"/>
<dbReference type="EC" id="2.1.1.264" evidence="1"/>
<dbReference type="EMBL" id="CP000247">
    <property type="protein sequence ID" value="ABG68966.1"/>
    <property type="molecule type" value="Genomic_DNA"/>
</dbReference>
<dbReference type="SMR" id="Q0TJB3"/>
<dbReference type="KEGG" id="ecp:ECP_0953"/>
<dbReference type="HOGENOM" id="CLU_014042_2_0_6"/>
<dbReference type="Proteomes" id="UP000009182">
    <property type="component" value="Chromosome"/>
</dbReference>
<dbReference type="GO" id="GO:0005737">
    <property type="term" value="C:cytoplasm"/>
    <property type="evidence" value="ECO:0007669"/>
    <property type="project" value="UniProtKB-SubCell"/>
</dbReference>
<dbReference type="GO" id="GO:0052915">
    <property type="term" value="F:23S rRNA (guanine(2445)-N(2))-methyltransferase activity"/>
    <property type="evidence" value="ECO:0007669"/>
    <property type="project" value="UniProtKB-UniRule"/>
</dbReference>
<dbReference type="GO" id="GO:0003723">
    <property type="term" value="F:RNA binding"/>
    <property type="evidence" value="ECO:0007669"/>
    <property type="project" value="UniProtKB-KW"/>
</dbReference>
<dbReference type="GO" id="GO:0070043">
    <property type="term" value="F:rRNA (guanine-N7-)-methyltransferase activity"/>
    <property type="evidence" value="ECO:0007669"/>
    <property type="project" value="UniProtKB-UniRule"/>
</dbReference>
<dbReference type="CDD" id="cd02440">
    <property type="entry name" value="AdoMet_MTases"/>
    <property type="match status" value="1"/>
</dbReference>
<dbReference type="CDD" id="cd11715">
    <property type="entry name" value="THUMP_AdoMetMT"/>
    <property type="match status" value="1"/>
</dbReference>
<dbReference type="FunFam" id="3.30.750.80:FF:000001">
    <property type="entry name" value="Ribosomal RNA large subunit methyltransferase K/L"/>
    <property type="match status" value="1"/>
</dbReference>
<dbReference type="FunFam" id="3.40.50.150:FF:000039">
    <property type="entry name" value="Ribosomal RNA large subunit methyltransferase K/L"/>
    <property type="match status" value="1"/>
</dbReference>
<dbReference type="Gene3D" id="3.30.2130.30">
    <property type="match status" value="1"/>
</dbReference>
<dbReference type="Gene3D" id="3.30.750.80">
    <property type="entry name" value="RNA methyltransferase domain (HRMD) like"/>
    <property type="match status" value="1"/>
</dbReference>
<dbReference type="Gene3D" id="3.40.50.150">
    <property type="entry name" value="Vaccinia Virus protein VP39"/>
    <property type="match status" value="2"/>
</dbReference>
<dbReference type="HAMAP" id="MF_01858">
    <property type="entry name" value="23SrRNA_methyltr_KL"/>
    <property type="match status" value="1"/>
</dbReference>
<dbReference type="InterPro" id="IPR017244">
    <property type="entry name" value="23SrRNA_methyltr_KL"/>
</dbReference>
<dbReference type="InterPro" id="IPR002052">
    <property type="entry name" value="DNA_methylase_N6_adenine_CS"/>
</dbReference>
<dbReference type="InterPro" id="IPR000241">
    <property type="entry name" value="RlmKL-like_Mtase"/>
</dbReference>
<dbReference type="InterPro" id="IPR053943">
    <property type="entry name" value="RlmKL-like_Mtase_CS"/>
</dbReference>
<dbReference type="InterPro" id="IPR054170">
    <property type="entry name" value="RlmL_1st"/>
</dbReference>
<dbReference type="InterPro" id="IPR019614">
    <property type="entry name" value="SAM-dep_methyl-trfase"/>
</dbReference>
<dbReference type="InterPro" id="IPR029063">
    <property type="entry name" value="SAM-dependent_MTases_sf"/>
</dbReference>
<dbReference type="InterPro" id="IPR004114">
    <property type="entry name" value="THUMP_dom"/>
</dbReference>
<dbReference type="NCBIfam" id="NF008748">
    <property type="entry name" value="PRK11783.1"/>
    <property type="match status" value="1"/>
</dbReference>
<dbReference type="PANTHER" id="PTHR47313">
    <property type="entry name" value="RIBOSOMAL RNA LARGE SUBUNIT METHYLTRANSFERASE K/L"/>
    <property type="match status" value="1"/>
</dbReference>
<dbReference type="PANTHER" id="PTHR47313:SF1">
    <property type="entry name" value="RIBOSOMAL RNA LARGE SUBUNIT METHYLTRANSFERASE K_L"/>
    <property type="match status" value="1"/>
</dbReference>
<dbReference type="Pfam" id="PF10672">
    <property type="entry name" value="Methyltrans_SAM"/>
    <property type="match status" value="1"/>
</dbReference>
<dbReference type="Pfam" id="PF22020">
    <property type="entry name" value="RlmL_1st"/>
    <property type="match status" value="1"/>
</dbReference>
<dbReference type="Pfam" id="PF02926">
    <property type="entry name" value="THUMP"/>
    <property type="match status" value="1"/>
</dbReference>
<dbReference type="Pfam" id="PF01170">
    <property type="entry name" value="UPF0020"/>
    <property type="match status" value="1"/>
</dbReference>
<dbReference type="PIRSF" id="PIRSF037618">
    <property type="entry name" value="RNA_Mtase_bacteria_prd"/>
    <property type="match status" value="1"/>
</dbReference>
<dbReference type="PRINTS" id="PR00507">
    <property type="entry name" value="N12N6MTFRASE"/>
</dbReference>
<dbReference type="SMART" id="SM00981">
    <property type="entry name" value="THUMP"/>
    <property type="match status" value="1"/>
</dbReference>
<dbReference type="SUPFAM" id="SSF53335">
    <property type="entry name" value="S-adenosyl-L-methionine-dependent methyltransferases"/>
    <property type="match status" value="2"/>
</dbReference>
<dbReference type="PROSITE" id="PS51165">
    <property type="entry name" value="THUMP"/>
    <property type="match status" value="1"/>
</dbReference>
<dbReference type="PROSITE" id="PS01261">
    <property type="entry name" value="UPF0020"/>
    <property type="match status" value="1"/>
</dbReference>
<gene>
    <name evidence="1" type="primary">rlmL</name>
    <name type="ordered locus">ECP_0953</name>
</gene>
<accession>Q0TJB3</accession>